<protein>
    <recommendedName>
        <fullName evidence="1">Phosphoenolpyruvate carboxykinase (ATP)</fullName>
        <shortName evidence="1">PCK</shortName>
        <shortName evidence="1">PEP carboxykinase</shortName>
        <shortName evidence="1">PEPCK</shortName>
        <ecNumber evidence="1">4.1.1.49</ecNumber>
    </recommendedName>
</protein>
<dbReference type="EC" id="4.1.1.49" evidence="1"/>
<dbReference type="EMBL" id="CP000266">
    <property type="protein sequence ID" value="ABF05450.1"/>
    <property type="molecule type" value="Genomic_DNA"/>
</dbReference>
<dbReference type="RefSeq" id="WP_005105989.1">
    <property type="nucleotide sequence ID" value="NC_008258.1"/>
</dbReference>
<dbReference type="SMR" id="Q0SZR5"/>
<dbReference type="KEGG" id="sfv:SFV_3408"/>
<dbReference type="HOGENOM" id="CLU_018247_0_1_6"/>
<dbReference type="UniPathway" id="UPA00138"/>
<dbReference type="Proteomes" id="UP000000659">
    <property type="component" value="Chromosome"/>
</dbReference>
<dbReference type="GO" id="GO:0005829">
    <property type="term" value="C:cytosol"/>
    <property type="evidence" value="ECO:0007669"/>
    <property type="project" value="TreeGrafter"/>
</dbReference>
<dbReference type="GO" id="GO:0005524">
    <property type="term" value="F:ATP binding"/>
    <property type="evidence" value="ECO:0007669"/>
    <property type="project" value="UniProtKB-UniRule"/>
</dbReference>
<dbReference type="GO" id="GO:0046872">
    <property type="term" value="F:metal ion binding"/>
    <property type="evidence" value="ECO:0007669"/>
    <property type="project" value="UniProtKB-KW"/>
</dbReference>
<dbReference type="GO" id="GO:0004612">
    <property type="term" value="F:phosphoenolpyruvate carboxykinase (ATP) activity"/>
    <property type="evidence" value="ECO:0007669"/>
    <property type="project" value="UniProtKB-UniRule"/>
</dbReference>
<dbReference type="GO" id="GO:0006094">
    <property type="term" value="P:gluconeogenesis"/>
    <property type="evidence" value="ECO:0007669"/>
    <property type="project" value="UniProtKB-UniRule"/>
</dbReference>
<dbReference type="CDD" id="cd00484">
    <property type="entry name" value="PEPCK_ATP"/>
    <property type="match status" value="1"/>
</dbReference>
<dbReference type="FunFam" id="2.170.8.10:FF:000001">
    <property type="entry name" value="Phosphoenolpyruvate carboxykinase (ATP)"/>
    <property type="match status" value="1"/>
</dbReference>
<dbReference type="FunFam" id="3.40.449.10:FF:000001">
    <property type="entry name" value="Phosphoenolpyruvate carboxykinase (ATP)"/>
    <property type="match status" value="1"/>
</dbReference>
<dbReference type="Gene3D" id="3.90.228.20">
    <property type="match status" value="1"/>
</dbReference>
<dbReference type="Gene3D" id="3.40.449.10">
    <property type="entry name" value="Phosphoenolpyruvate Carboxykinase, domain 1"/>
    <property type="match status" value="1"/>
</dbReference>
<dbReference type="Gene3D" id="2.170.8.10">
    <property type="entry name" value="Phosphoenolpyruvate Carboxykinase, domain 2"/>
    <property type="match status" value="1"/>
</dbReference>
<dbReference type="HAMAP" id="MF_00453">
    <property type="entry name" value="PEPCK_ATP"/>
    <property type="match status" value="1"/>
</dbReference>
<dbReference type="InterPro" id="IPR001272">
    <property type="entry name" value="PEP_carboxykinase_ATP"/>
</dbReference>
<dbReference type="InterPro" id="IPR013035">
    <property type="entry name" value="PEP_carboxykinase_C"/>
</dbReference>
<dbReference type="InterPro" id="IPR008210">
    <property type="entry name" value="PEP_carboxykinase_N"/>
</dbReference>
<dbReference type="InterPro" id="IPR015994">
    <property type="entry name" value="PEPCK_ATP_CS"/>
</dbReference>
<dbReference type="NCBIfam" id="TIGR00224">
    <property type="entry name" value="pckA"/>
    <property type="match status" value="1"/>
</dbReference>
<dbReference type="NCBIfam" id="NF006819">
    <property type="entry name" value="PRK09344.1-1"/>
    <property type="match status" value="1"/>
</dbReference>
<dbReference type="NCBIfam" id="NF006820">
    <property type="entry name" value="PRK09344.1-2"/>
    <property type="match status" value="1"/>
</dbReference>
<dbReference type="NCBIfam" id="NF006821">
    <property type="entry name" value="PRK09344.1-3"/>
    <property type="match status" value="1"/>
</dbReference>
<dbReference type="PANTHER" id="PTHR30031:SF0">
    <property type="entry name" value="PHOSPHOENOLPYRUVATE CARBOXYKINASE (ATP)"/>
    <property type="match status" value="1"/>
</dbReference>
<dbReference type="PANTHER" id="PTHR30031">
    <property type="entry name" value="PHOSPHOENOLPYRUVATE CARBOXYKINASE ATP"/>
    <property type="match status" value="1"/>
</dbReference>
<dbReference type="Pfam" id="PF01293">
    <property type="entry name" value="PEPCK_ATP"/>
    <property type="match status" value="1"/>
</dbReference>
<dbReference type="PIRSF" id="PIRSF006294">
    <property type="entry name" value="PEP_crbxkin"/>
    <property type="match status" value="1"/>
</dbReference>
<dbReference type="SUPFAM" id="SSF68923">
    <property type="entry name" value="PEP carboxykinase N-terminal domain"/>
    <property type="match status" value="1"/>
</dbReference>
<dbReference type="SUPFAM" id="SSF53795">
    <property type="entry name" value="PEP carboxykinase-like"/>
    <property type="match status" value="1"/>
</dbReference>
<dbReference type="PROSITE" id="PS00532">
    <property type="entry name" value="PEPCK_ATP"/>
    <property type="match status" value="1"/>
</dbReference>
<accession>Q0SZR5</accession>
<keyword id="KW-0007">Acetylation</keyword>
<keyword id="KW-0067">ATP-binding</keyword>
<keyword id="KW-0963">Cytoplasm</keyword>
<keyword id="KW-0210">Decarboxylase</keyword>
<keyword id="KW-0312">Gluconeogenesis</keyword>
<keyword id="KW-0456">Lyase</keyword>
<keyword id="KW-0464">Manganese</keyword>
<keyword id="KW-0479">Metal-binding</keyword>
<keyword id="KW-0547">Nucleotide-binding</keyword>
<feature type="chain" id="PRO_1000026360" description="Phosphoenolpyruvate carboxykinase (ATP)">
    <location>
        <begin position="1"/>
        <end position="540"/>
    </location>
</feature>
<feature type="binding site" evidence="1">
    <location>
        <position position="65"/>
    </location>
    <ligand>
        <name>substrate</name>
    </ligand>
</feature>
<feature type="binding site" evidence="1">
    <location>
        <position position="207"/>
    </location>
    <ligand>
        <name>substrate</name>
    </ligand>
</feature>
<feature type="binding site" evidence="1">
    <location>
        <position position="213"/>
    </location>
    <ligand>
        <name>ATP</name>
        <dbReference type="ChEBI" id="CHEBI:30616"/>
    </ligand>
</feature>
<feature type="binding site" evidence="1">
    <location>
        <position position="213"/>
    </location>
    <ligand>
        <name>Mn(2+)</name>
        <dbReference type="ChEBI" id="CHEBI:29035"/>
    </ligand>
</feature>
<feature type="binding site" evidence="1">
    <location>
        <position position="213"/>
    </location>
    <ligand>
        <name>substrate</name>
    </ligand>
</feature>
<feature type="binding site" evidence="1">
    <location>
        <position position="232"/>
    </location>
    <ligand>
        <name>ATP</name>
        <dbReference type="ChEBI" id="CHEBI:30616"/>
    </ligand>
</feature>
<feature type="binding site" evidence="1">
    <location>
        <position position="232"/>
    </location>
    <ligand>
        <name>Mn(2+)</name>
        <dbReference type="ChEBI" id="CHEBI:29035"/>
    </ligand>
</feature>
<feature type="binding site" evidence="1">
    <location>
        <begin position="248"/>
        <end position="256"/>
    </location>
    <ligand>
        <name>ATP</name>
        <dbReference type="ChEBI" id="CHEBI:30616"/>
    </ligand>
</feature>
<feature type="binding site" evidence="1">
    <location>
        <position position="269"/>
    </location>
    <ligand>
        <name>Mn(2+)</name>
        <dbReference type="ChEBI" id="CHEBI:29035"/>
    </ligand>
</feature>
<feature type="binding site" evidence="1">
    <location>
        <position position="297"/>
    </location>
    <ligand>
        <name>ATP</name>
        <dbReference type="ChEBI" id="CHEBI:30616"/>
    </ligand>
</feature>
<feature type="binding site" evidence="1">
    <location>
        <position position="333"/>
    </location>
    <ligand>
        <name>ATP</name>
        <dbReference type="ChEBI" id="CHEBI:30616"/>
    </ligand>
</feature>
<feature type="binding site" evidence="1">
    <location>
        <position position="333"/>
    </location>
    <ligand>
        <name>substrate</name>
    </ligand>
</feature>
<feature type="binding site" evidence="1">
    <location>
        <begin position="449"/>
        <end position="450"/>
    </location>
    <ligand>
        <name>ATP</name>
        <dbReference type="ChEBI" id="CHEBI:30616"/>
    </ligand>
</feature>
<feature type="binding site" evidence="1">
    <location>
        <position position="455"/>
    </location>
    <ligand>
        <name>ATP</name>
        <dbReference type="ChEBI" id="CHEBI:30616"/>
    </ligand>
</feature>
<feature type="modified residue" description="N6-acetyllysine" evidence="1">
    <location>
        <position position="87"/>
    </location>
</feature>
<feature type="modified residue" description="N6-acetyllysine" evidence="1">
    <location>
        <position position="523"/>
    </location>
</feature>
<proteinExistence type="inferred from homology"/>
<reference key="1">
    <citation type="journal article" date="2006" name="BMC Genomics">
        <title>Complete genome sequence of Shigella flexneri 5b and comparison with Shigella flexneri 2a.</title>
        <authorList>
            <person name="Nie H."/>
            <person name="Yang F."/>
            <person name="Zhang X."/>
            <person name="Yang J."/>
            <person name="Chen L."/>
            <person name="Wang J."/>
            <person name="Xiong Z."/>
            <person name="Peng J."/>
            <person name="Sun L."/>
            <person name="Dong J."/>
            <person name="Xue Y."/>
            <person name="Xu X."/>
            <person name="Chen S."/>
            <person name="Yao Z."/>
            <person name="Shen Y."/>
            <person name="Jin Q."/>
        </authorList>
    </citation>
    <scope>NUCLEOTIDE SEQUENCE [LARGE SCALE GENOMIC DNA]</scope>
    <source>
        <strain>8401</strain>
    </source>
</reference>
<sequence>MRVNNGLTPQELEAYGISDVHDIVYNPSYDLLYQEELDPSLTGYERGVLTNLGAVAVDTGIFTGRSPKDKYIVRDDTTRDTFWWADKGKGKNDNKPLSPETWQHLKGLVTRQLSGKRLFVVDAFCGANPDTRLSVRFITEVAWQAHFVKNMFIRPSDEELAGFKPDFIVMNGAKCTNPQWKEQGLNSENFVAFNLTERMQLIGGTWYGGEMKKGMFSMMNYLLPLKGIASMHCSANVGEKGDVAVFFGLSGTGKTTLSTDPKRRLIGDDEHGWDDDGVFNFEGGCYAKTIKLSKEAEPEIYNAIRRDALLENVTVREDGTIDFDDGSKTENTRVSYPIYHIDNIVKPVSKAGHATKVIFLTADAFGVLPPVSRLTADQTQYHFLSGFTAKLAGTERGITEPTPTFSACFGAAFLSLHPTQYAEVLVKRMQAAGAQAYLVNTGWNGTGKRISIKDTRAIIDAILNGSLDNAETFTLPMFNLAIPTELPGVDTKILDPRNTYASPEQWQEKAETLAKLFIDNFDKYTDTPAGTALVAAGPKL</sequence>
<comment type="function">
    <text evidence="1">Involved in the gluconeogenesis. Catalyzes the conversion of oxaloacetate (OAA) to phosphoenolpyruvate (PEP) through direct phosphoryl transfer between the nucleoside triphosphate and OAA.</text>
</comment>
<comment type="catalytic activity">
    <reaction evidence="1">
        <text>oxaloacetate + ATP = phosphoenolpyruvate + ADP + CO2</text>
        <dbReference type="Rhea" id="RHEA:18617"/>
        <dbReference type="ChEBI" id="CHEBI:16452"/>
        <dbReference type="ChEBI" id="CHEBI:16526"/>
        <dbReference type="ChEBI" id="CHEBI:30616"/>
        <dbReference type="ChEBI" id="CHEBI:58702"/>
        <dbReference type="ChEBI" id="CHEBI:456216"/>
        <dbReference type="EC" id="4.1.1.49"/>
    </reaction>
</comment>
<comment type="cofactor">
    <cofactor evidence="1">
        <name>Mn(2+)</name>
        <dbReference type="ChEBI" id="CHEBI:29035"/>
    </cofactor>
    <text evidence="1">Binds 1 Mn(2+) ion per subunit.</text>
</comment>
<comment type="pathway">
    <text evidence="1">Carbohydrate biosynthesis; gluconeogenesis.</text>
</comment>
<comment type="subunit">
    <text evidence="1">Monomer.</text>
</comment>
<comment type="subcellular location">
    <subcellularLocation>
        <location evidence="1">Cytoplasm</location>
    </subcellularLocation>
</comment>
<comment type="similarity">
    <text evidence="1">Belongs to the phosphoenolpyruvate carboxykinase (ATP) family.</text>
</comment>
<name>PCKA_SHIF8</name>
<evidence type="ECO:0000255" key="1">
    <source>
        <dbReference type="HAMAP-Rule" id="MF_00453"/>
    </source>
</evidence>
<organism>
    <name type="scientific">Shigella flexneri serotype 5b (strain 8401)</name>
    <dbReference type="NCBI Taxonomy" id="373384"/>
    <lineage>
        <taxon>Bacteria</taxon>
        <taxon>Pseudomonadati</taxon>
        <taxon>Pseudomonadota</taxon>
        <taxon>Gammaproteobacteria</taxon>
        <taxon>Enterobacterales</taxon>
        <taxon>Enterobacteriaceae</taxon>
        <taxon>Shigella</taxon>
    </lineage>
</organism>
<gene>
    <name evidence="1" type="primary">pckA</name>
    <name type="ordered locus">SFV_3408</name>
</gene>